<proteinExistence type="inferred from homology"/>
<feature type="signal peptide" evidence="2">
    <location>
        <begin position="1"/>
        <end position="29"/>
    </location>
</feature>
<feature type="chain" id="PRO_0000281411" description="Type IV secretion system protein virB2">
    <location>
        <begin position="30"/>
        <end position="104"/>
    </location>
</feature>
<feature type="transmembrane region" description="Helical" evidence="2">
    <location>
        <begin position="57"/>
        <end position="77"/>
    </location>
</feature>
<feature type="transmembrane region" description="Helical" evidence="2">
    <location>
        <begin position="81"/>
        <end position="101"/>
    </location>
</feature>
<reference key="1">
    <citation type="submission" date="2002-06" db="EMBL/GenBank/DDBJ databases">
        <title>Evolution of type IV secretion systems in Bartonella: horizontal transmission and gene conversion.</title>
        <authorList>
            <person name="Alsmark U.C.M."/>
            <person name="Frank A.C."/>
            <person name="Thollesson M."/>
            <person name="Andersson S.G.E."/>
        </authorList>
    </citation>
    <scope>NUCLEOTIDE SEQUENCE [GENOMIC DNA]</scope>
    <source>
        <strain>Toulouse</strain>
    </source>
</reference>
<reference key="2">
    <citation type="submission" date="2003-01" db="EMBL/GenBank/DDBJ databases">
        <title>Genes composing the virB operon of Bartonella quintana.</title>
        <authorList>
            <person name="Kohlhorst D.E."/>
            <person name="Soni T."/>
            <person name="Baumstark B.R."/>
        </authorList>
    </citation>
    <scope>NUCLEOTIDE SEQUENCE [GENOMIC DNA]</scope>
    <source>
        <strain>ATCC VR-358 / Fuller / CIP 107027</strain>
    </source>
</reference>
<reference key="3">
    <citation type="journal article" date="2004" name="Proc. Natl. Acad. Sci. U.S.A.">
        <title>The louse-borne human pathogen Bartonella quintana is a genomic derivative of the zoonotic agent Bartonella henselae.</title>
        <authorList>
            <person name="Alsmark U.C.M."/>
            <person name="Frank A.C."/>
            <person name="Karlberg E.O."/>
            <person name="Legault B.-A."/>
            <person name="Ardell D.H."/>
            <person name="Canbaeck B."/>
            <person name="Eriksson A.-S."/>
            <person name="Naeslund A.K."/>
            <person name="Handley S.A."/>
            <person name="Huvet M."/>
            <person name="La Scola B."/>
            <person name="Holmberg M."/>
            <person name="Andersson S.G.E."/>
        </authorList>
    </citation>
    <scope>NUCLEOTIDE SEQUENCE [LARGE SCALE GENOMIC DNA]</scope>
    <scope>POSSIBLE FUNCTION</scope>
    <source>
        <strain>Toulouse</strain>
    </source>
</reference>
<accession>Q8KQC3</accession>
<accession>Q4L2R1</accession>
<accession>Q6FYW9</accession>
<name>VIRB2_BARQU</name>
<protein>
    <recommendedName>
        <fullName>Type IV secretion system protein virB2</fullName>
    </recommendedName>
</protein>
<gene>
    <name type="primary">virB2</name>
    <name type="ordered locus">BQ10530</name>
</gene>
<sequence>MTETISRNIIFIVIVLLLTALVVSNPSYAANSASSLGNVDSVLQNIVTMMTGTTAKLIAIICVAAVGIGWMSGFIDLRKAAYCILGIGIVFGAPTLVSTLMGSS</sequence>
<evidence type="ECO:0000250" key="1"/>
<evidence type="ECO:0000255" key="2"/>
<evidence type="ECO:0000305" key="3"/>
<comment type="function">
    <text>Component of the type IV secretion system VirB/VirD4 which could be a major virulence determinant for subversion of human endothelial cell (HEC) function. VirB2 seems to constitute the major pilus component.</text>
</comment>
<comment type="subunit">
    <text evidence="1 3">Homooligomer (Potential). Interacts with the 17 kDa antigen protein that is encoded within the VirB locus (By similarity).</text>
</comment>
<comment type="subcellular location">
    <subcellularLocation>
        <location evidence="3">Cell outer membrane</location>
        <topology evidence="3">Multi-pass membrane protein</topology>
    </subcellularLocation>
</comment>
<comment type="similarity">
    <text evidence="3">Belongs to the virB2 family.</text>
</comment>
<organism>
    <name type="scientific">Bartonella quintana (strain Toulouse)</name>
    <name type="common">Rochalimaea quintana</name>
    <dbReference type="NCBI Taxonomy" id="283165"/>
    <lineage>
        <taxon>Bacteria</taxon>
        <taxon>Pseudomonadati</taxon>
        <taxon>Pseudomonadota</taxon>
        <taxon>Alphaproteobacteria</taxon>
        <taxon>Hyphomicrobiales</taxon>
        <taxon>Bartonellaceae</taxon>
        <taxon>Bartonella</taxon>
    </lineage>
</organism>
<dbReference type="EMBL" id="AY122055">
    <property type="protein sequence ID" value="AAM82235.1"/>
    <property type="molecule type" value="Genomic_DNA"/>
</dbReference>
<dbReference type="EMBL" id="AY216720">
    <property type="protein sequence ID" value="AAM43798.1"/>
    <property type="molecule type" value="Genomic_DNA"/>
</dbReference>
<dbReference type="EMBL" id="BX897700">
    <property type="protein sequence ID" value="CAF26520.1"/>
    <property type="molecule type" value="Genomic_DNA"/>
</dbReference>
<dbReference type="RefSeq" id="WP_011179724.1">
    <property type="nucleotide sequence ID" value="NC_005955.1"/>
</dbReference>
<dbReference type="SMR" id="Q8KQC3"/>
<dbReference type="KEGG" id="bqu:BQ10530"/>
<dbReference type="eggNOG" id="COG3838">
    <property type="taxonomic scope" value="Bacteria"/>
</dbReference>
<dbReference type="HOGENOM" id="CLU_158657_0_0_5"/>
<dbReference type="OrthoDB" id="7211121at2"/>
<dbReference type="Proteomes" id="UP000000597">
    <property type="component" value="Chromosome"/>
</dbReference>
<dbReference type="GO" id="GO:0009279">
    <property type="term" value="C:cell outer membrane"/>
    <property type="evidence" value="ECO:0007669"/>
    <property type="project" value="UniProtKB-SubCell"/>
</dbReference>
<dbReference type="InterPro" id="IPR007039">
    <property type="entry name" value="TrbC/VirB2"/>
</dbReference>
<dbReference type="Pfam" id="PF04956">
    <property type="entry name" value="TrbC"/>
    <property type="match status" value="1"/>
</dbReference>
<keyword id="KW-0998">Cell outer membrane</keyword>
<keyword id="KW-0472">Membrane</keyword>
<keyword id="KW-0732">Signal</keyword>
<keyword id="KW-0812">Transmembrane</keyword>
<keyword id="KW-1133">Transmembrane helix</keyword>
<keyword id="KW-0813">Transport</keyword>
<keyword id="KW-0843">Virulence</keyword>